<proteinExistence type="inferred from homology"/>
<reference key="1">
    <citation type="journal article" date="2004" name="Nature">
        <title>Genesis of a highly pathogenic and potentially pandemic H5N1 influenza virus in eastern Asia.</title>
        <authorList>
            <person name="Li K.S."/>
            <person name="Guan Y."/>
            <person name="Wang J."/>
            <person name="Smith G.J.D."/>
            <person name="Xu K.M."/>
            <person name="Duan L."/>
            <person name="Rahardjo A.P."/>
            <person name="Puthavathana P."/>
            <person name="Buranathai C."/>
            <person name="Nguyen T.D."/>
            <person name="Estoepangestie A.T.S."/>
            <person name="Chaisingh A."/>
            <person name="Auewarakul P."/>
            <person name="Long H.T."/>
            <person name="Hanh N.T.H."/>
            <person name="Webby R.J."/>
            <person name="Poon L.L.M."/>
            <person name="Chen H."/>
            <person name="Shortridge K.F."/>
            <person name="Yuen K.Y."/>
            <person name="Webster R.G."/>
            <person name="Peiris J.S.M."/>
        </authorList>
    </citation>
    <scope>NUCLEOTIDE SEQUENCE [GENOMIC RNA]</scope>
</reference>
<organismHost>
    <name type="scientific">Aves</name>
    <dbReference type="NCBI Taxonomy" id="8782"/>
</organismHost>
<organismHost>
    <name type="scientific">Felis catus</name>
    <name type="common">Cat</name>
    <name type="synonym">Felis silvestris catus</name>
    <dbReference type="NCBI Taxonomy" id="9685"/>
</organismHost>
<organismHost>
    <name type="scientific">Homo sapiens</name>
    <name type="common">Human</name>
    <dbReference type="NCBI Taxonomy" id="9606"/>
</organismHost>
<organismHost>
    <name type="scientific">Panthera pardus</name>
    <name type="common">Leopard</name>
    <name type="synonym">Felis pardus</name>
    <dbReference type="NCBI Taxonomy" id="9691"/>
</organismHost>
<organismHost>
    <name type="scientific">Panthera tigris</name>
    <name type="common">Tiger</name>
    <dbReference type="NCBI Taxonomy" id="9694"/>
</organismHost>
<organismHost>
    <name type="scientific">Sus scrofa</name>
    <name type="common">Pig</name>
    <dbReference type="NCBI Taxonomy" id="9823"/>
</organismHost>
<evidence type="ECO:0000255" key="1">
    <source>
        <dbReference type="HAMAP-Rule" id="MF_04069"/>
    </source>
</evidence>
<evidence type="ECO:0000256" key="2">
    <source>
        <dbReference type="SAM" id="MobiDB-lite"/>
    </source>
</evidence>
<feature type="chain" id="PRO_0000311629" description="Matrix protein 2">
    <location>
        <begin position="1"/>
        <end position="97"/>
    </location>
</feature>
<feature type="topological domain" description="Virion surface" evidence="1">
    <location>
        <begin position="1"/>
        <end position="22"/>
    </location>
</feature>
<feature type="transmembrane region" description="Helical; Signal-anchor for type III membrane protein" evidence="1">
    <location>
        <begin position="23"/>
        <end position="43"/>
    </location>
</feature>
<feature type="topological domain" description="Intravirion" evidence="1">
    <location>
        <begin position="44"/>
        <end position="97"/>
    </location>
</feature>
<feature type="region of interest" description="Disordered" evidence="2">
    <location>
        <begin position="60"/>
        <end position="83"/>
    </location>
</feature>
<feature type="site" description="Essential for channel activity, possibly by being protonated during channel activation, and by forming the channel gate and the selective filter" evidence="1">
    <location>
        <position position="37"/>
    </location>
</feature>
<feature type="site" description="Seems to be involved in pH gating" evidence="1">
    <location>
        <position position="41"/>
    </location>
</feature>
<feature type="modified residue" description="Phosphoserine; by host" evidence="1">
    <location>
        <position position="64"/>
    </location>
</feature>
<feature type="modified residue" description="Phosphoserine; by host" evidence="1">
    <location>
        <position position="82"/>
    </location>
</feature>
<feature type="lipid moiety-binding region" description="S-palmitoyl cysteine; by host" evidence="1">
    <location>
        <position position="50"/>
    </location>
</feature>
<feature type="disulfide bond" description="Interchain (with C-17)" evidence="1">
    <location>
        <position position="17"/>
    </location>
</feature>
<feature type="disulfide bond" description="Interchain (with C-19)" evidence="1">
    <location>
        <position position="19"/>
    </location>
</feature>
<comment type="function">
    <text evidence="1">Forms a proton-selective ion channel that is necessary for the efficient release of the viral genome during virus entry. After attaching to the cell surface, the virion enters the cell by endocytosis. Acidification of the endosome triggers M2 ion channel activity. The influx of protons into virion interior is believed to disrupt interactions between the viral ribonucleoprotein (RNP), matrix protein 1 (M1), and lipid bilayers, thereby freeing the viral genome from interaction with viral proteins and enabling RNA segments to migrate to the host cell nucleus, where influenza virus RNA transcription and replication occur. Also plays a role in viral proteins secretory pathway. Elevates the intravesicular pH of normally acidic compartments, such as trans-Golgi network, preventing newly formed hemagglutinin from premature switching to the fusion-active conformation.</text>
</comment>
<comment type="activity regulation">
    <text>The M2 protein from most influenza A strains is inhibited by amantadine and rimantadine, resulting in viral uncoating incapacity. Emergence of amantadine-resistant variants is usually rapid.</text>
</comment>
<comment type="subunit">
    <text evidence="1">Homotetramer; composed of two disulfide-linked dimers held together by non-covalent interactions. May interact with matrix protein 1.</text>
</comment>
<comment type="subcellular location">
    <subcellularLocation>
        <location evidence="1">Virion membrane</location>
    </subcellularLocation>
    <subcellularLocation>
        <location evidence="1">Host apical cell membrane</location>
        <topology evidence="1">Single-pass type III membrane protein</topology>
    </subcellularLocation>
    <text evidence="1">Abundantly expressed at the apical plasma membrane in infected polarized epithelial cells, in close proximity to budding and assembled virions. Minor component of virions (only 16-20 molecules/virion).</text>
</comment>
<comment type="alternative products">
    <event type="alternative splicing"/>
    <isoform>
        <id>Q6DPT7-1</id>
        <name>M2</name>
        <sequence type="displayed"/>
    </isoform>
    <isoform>
        <id>Q6DPT6-1</id>
        <name>M1</name>
        <sequence type="external"/>
    </isoform>
    <text>Only the first 9 residues are shared by the 2 isoforms.</text>
</comment>
<comment type="domain">
    <text evidence="1">Cytoplasmic tail plays an important role in virion assembly and morphogenesis.</text>
</comment>
<comment type="miscellaneous">
    <text evidence="1">When the channel is activated, one or more imidazole moieties of His-37 probably become bi-protonated.</text>
</comment>
<comment type="similarity">
    <text evidence="1">Belongs to the influenza viruses matrix protein M2 family.</text>
</comment>
<sequence length="97" mass="11059">MSLLTEVETPTRTGWECKCSDSSDPLVVAASIIGILHLILWILDRLFFKCIYRRLKYGLKRGPSTGGVPESMREEYRQEQQSAVDVDDGHFVNIELE</sequence>
<protein>
    <recommendedName>
        <fullName evidence="1">Matrix protein 2</fullName>
    </recommendedName>
    <alternativeName>
        <fullName evidence="1">Proton channel protein M2</fullName>
    </alternativeName>
</protein>
<name>M2_I02A4</name>
<accession>Q6DPT7</accession>
<organism>
    <name type="scientific">Influenza A virus (strain A/Silky Chicken/Hong Kong/YU100/2002 H5N1 genotype X3)</name>
    <dbReference type="NCBI Taxonomy" id="284214"/>
    <lineage>
        <taxon>Viruses</taxon>
        <taxon>Riboviria</taxon>
        <taxon>Orthornavirae</taxon>
        <taxon>Negarnaviricota</taxon>
        <taxon>Polyploviricotina</taxon>
        <taxon>Insthoviricetes</taxon>
        <taxon>Articulavirales</taxon>
        <taxon>Orthomyxoviridae</taxon>
        <taxon>Alphainfluenzavirus</taxon>
        <taxon>Alphainfluenzavirus influenzae</taxon>
        <taxon>Influenza A virus</taxon>
    </lineage>
</organism>
<dbReference type="EMBL" id="AY651402">
    <property type="protein sequence ID" value="AAT70556.1"/>
    <property type="molecule type" value="Genomic_RNA"/>
</dbReference>
<dbReference type="SMR" id="Q6DPT7"/>
<dbReference type="GO" id="GO:0020002">
    <property type="term" value="C:host cell plasma membrane"/>
    <property type="evidence" value="ECO:0007669"/>
    <property type="project" value="UniProtKB-SubCell"/>
</dbReference>
<dbReference type="GO" id="GO:0016020">
    <property type="term" value="C:membrane"/>
    <property type="evidence" value="ECO:0007669"/>
    <property type="project" value="UniProtKB-UniRule"/>
</dbReference>
<dbReference type="GO" id="GO:0055036">
    <property type="term" value="C:virion membrane"/>
    <property type="evidence" value="ECO:0007669"/>
    <property type="project" value="UniProtKB-SubCell"/>
</dbReference>
<dbReference type="GO" id="GO:0005216">
    <property type="term" value="F:monoatomic ion channel activity"/>
    <property type="evidence" value="ECO:0007669"/>
    <property type="project" value="UniProtKB-UniRule"/>
</dbReference>
<dbReference type="GO" id="GO:0015078">
    <property type="term" value="F:proton transmembrane transporter activity"/>
    <property type="evidence" value="ECO:0007669"/>
    <property type="project" value="UniProtKB-UniRule"/>
</dbReference>
<dbReference type="GO" id="GO:0051259">
    <property type="term" value="P:protein complex oligomerization"/>
    <property type="evidence" value="ECO:0007669"/>
    <property type="project" value="UniProtKB-UniRule"/>
</dbReference>
<dbReference type="GO" id="GO:0044694">
    <property type="term" value="P:symbiont genome entry into host cell via pore formation in plasma membrane"/>
    <property type="evidence" value="ECO:0007669"/>
    <property type="project" value="UniProtKB-UniRule"/>
</dbReference>
<dbReference type="GO" id="GO:0140321">
    <property type="term" value="P:symbiont-mediated suppression of host autophagy"/>
    <property type="evidence" value="ECO:0007669"/>
    <property type="project" value="UniProtKB-KW"/>
</dbReference>
<dbReference type="Gene3D" id="6.10.250.1640">
    <property type="match status" value="1"/>
</dbReference>
<dbReference type="HAMAP" id="MF_04069">
    <property type="entry name" value="INFV_M2"/>
    <property type="match status" value="1"/>
</dbReference>
<dbReference type="InterPro" id="IPR002089">
    <property type="entry name" value="Flu_M2"/>
</dbReference>
<dbReference type="Pfam" id="PF00599">
    <property type="entry name" value="Flu_M2"/>
    <property type="match status" value="1"/>
</dbReference>
<gene>
    <name evidence="1" type="primary">M</name>
</gene>
<keyword id="KW-0025">Alternative splicing</keyword>
<keyword id="KW-1015">Disulfide bond</keyword>
<keyword id="KW-1032">Host cell membrane</keyword>
<keyword id="KW-1043">Host membrane</keyword>
<keyword id="KW-0945">Host-virus interaction</keyword>
<keyword id="KW-0375">Hydrogen ion transport</keyword>
<keyword id="KW-1083">Inhibition of host autophagy by virus</keyword>
<keyword id="KW-0407">Ion channel</keyword>
<keyword id="KW-0406">Ion transport</keyword>
<keyword id="KW-0449">Lipoprotein</keyword>
<keyword id="KW-0472">Membrane</keyword>
<keyword id="KW-0564">Palmitate</keyword>
<keyword id="KW-0597">Phosphoprotein</keyword>
<keyword id="KW-0735">Signal-anchor</keyword>
<keyword id="KW-0812">Transmembrane</keyword>
<keyword id="KW-1133">Transmembrane helix</keyword>
<keyword id="KW-0813">Transport</keyword>
<keyword id="KW-1182">Viral ion channel</keyword>
<keyword id="KW-0946">Virion</keyword>